<protein>
    <recommendedName>
        <fullName evidence="1">Protein Vpr</fullName>
    </recommendedName>
    <alternativeName>
        <fullName evidence="1">R ORF protein</fullName>
    </alternativeName>
    <alternativeName>
        <fullName evidence="1">Viral protein R</fullName>
    </alternativeName>
</protein>
<comment type="function">
    <text evidence="1">During virus replication, may deplete host UNG protein, and incude G2-M cell cycle arrest. Acts by targeting specific host proteins for degradation by the 26S proteasome, through association with the cellular CUL4A-DDB1 E3 ligase complex by direct interaction with host VPRPB/DCAF-1. Cell cycle arrest reportedly occurs within hours of infection and is not blocked by antiviral agents, suggesting that it is initiated by the VPR carried into the virion. Additionally, VPR induces apoptosis in a cell cycle dependent manner suggesting that these two effects are mechanistically linked. Detected in the serum and cerebrospinal fluid of AIDS patient, VPR may also induce cell death to bystander cells.</text>
</comment>
<comment type="function">
    <text evidence="1">During virus entry, plays a role in the transport of the viral pre-integration (PIC) complex to the host nucleus. This function is crucial for viral infection of non-dividing macrophages. May act directly at the nuclear pore complex, by binding nucleoporins phenylalanine-glycine (FG)-repeat regions.</text>
</comment>
<comment type="subunit">
    <text evidence="1">Homooligomer, may form homodimer. Interacts with p6-gag region of the Pr55 Gag precursor protein through a (Leu-X-X)4 motif near the C-terminus of the P6gag protein. Interacts with host UNG. May interact with host RAD23A/HHR23A. Interacts with host VPRBP/DCAF1, leading to hijack the CUL4A-RBX1-DDB1-DCAF1/VPRBP complex, mediating ubiquitination of host proteins such as TERT and ZGPAT and arrest of the cell cycle in G2 phase.</text>
</comment>
<comment type="subcellular location">
    <subcellularLocation>
        <location evidence="1">Virion</location>
    </subcellularLocation>
    <subcellularLocation>
        <location evidence="1">Host nucleus</location>
    </subcellularLocation>
    <subcellularLocation>
        <location evidence="1">Host extracellular space</location>
    </subcellularLocation>
    <text evidence="1">Incorporation into virion is dependent on p6 GAG sequences. Lacks a canonical nuclear localization signal, thus import into nucleus may function independently of the human importin pathway. Detected in high quantity in the serum and cerebrospinal fluid of AIDS patient.</text>
</comment>
<comment type="PTM">
    <text evidence="1">Phosphorylated on several residues by host. These phosphorylations regulate VPR activity for the nuclear import of the HIV-1 pre-integration complex.</text>
</comment>
<comment type="miscellaneous">
    <text evidence="1">HIV-1 lineages are divided in three main groups, M (for Major), O (for Outlier), and N (for New, or Non-M, Non-O). The vast majority of strains found worldwide belong to the group M. Group O seems to be endemic to and largely confined to Cameroon and neighboring countries in West Central Africa, where these viruses represent a small minority of HIV-1 strains. The group N is represented by a limited number of isolates from Cameroonian persons. The group M is further subdivided in 9 clades or subtypes (A to D, F to H, J and K).</text>
</comment>
<comment type="similarity">
    <text evidence="1">Belongs to the HIV-1 VPR protein family.</text>
</comment>
<dbReference type="EMBL" id="AJ271370">
    <property type="protein sequence ID" value="CAB96341.1"/>
    <property type="molecule type" value="Genomic_DNA"/>
</dbReference>
<dbReference type="SMR" id="Q9IDV6"/>
<dbReference type="Proteomes" id="UP000007714">
    <property type="component" value="Segment"/>
</dbReference>
<dbReference type="GO" id="GO:0043657">
    <property type="term" value="C:host cell"/>
    <property type="evidence" value="ECO:0007669"/>
    <property type="project" value="GOC"/>
</dbReference>
<dbReference type="GO" id="GO:0042025">
    <property type="term" value="C:host cell nucleus"/>
    <property type="evidence" value="ECO:0007669"/>
    <property type="project" value="UniProtKB-SubCell"/>
</dbReference>
<dbReference type="GO" id="GO:0043655">
    <property type="term" value="C:host extracellular space"/>
    <property type="evidence" value="ECO:0007669"/>
    <property type="project" value="UniProtKB-SubCell"/>
</dbReference>
<dbReference type="GO" id="GO:0044423">
    <property type="term" value="C:virion component"/>
    <property type="evidence" value="ECO:0007669"/>
    <property type="project" value="UniProtKB-UniRule"/>
</dbReference>
<dbReference type="GO" id="GO:0006351">
    <property type="term" value="P:DNA-templated transcription"/>
    <property type="evidence" value="ECO:0007669"/>
    <property type="project" value="UniProtKB-UniRule"/>
</dbReference>
<dbReference type="GO" id="GO:0034220">
    <property type="term" value="P:monoatomic ion transmembrane transport"/>
    <property type="evidence" value="ECO:0007669"/>
    <property type="project" value="UniProtKB-KW"/>
</dbReference>
<dbReference type="GO" id="GO:0051260">
    <property type="term" value="P:protein homooligomerization"/>
    <property type="evidence" value="ECO:0007669"/>
    <property type="project" value="UniProtKB-UniRule"/>
</dbReference>
<dbReference type="GO" id="GO:0006355">
    <property type="term" value="P:regulation of DNA-templated transcription"/>
    <property type="evidence" value="ECO:0007669"/>
    <property type="project" value="UniProtKB-UniRule"/>
</dbReference>
<dbReference type="GO" id="GO:0046718">
    <property type="term" value="P:symbiont entry into host cell"/>
    <property type="evidence" value="ECO:0007669"/>
    <property type="project" value="UniProtKB-KW"/>
</dbReference>
<dbReference type="GO" id="GO:0052151">
    <property type="term" value="P:symbiont-mediated activation of host apoptosis"/>
    <property type="evidence" value="ECO:0007669"/>
    <property type="project" value="UniProtKB-UniRule"/>
</dbReference>
<dbReference type="GO" id="GO:0039592">
    <property type="term" value="P:symbiont-mediated arrest of host cell cycle during G2/M transition"/>
    <property type="evidence" value="ECO:0007669"/>
    <property type="project" value="UniProtKB-UniRule"/>
</dbReference>
<dbReference type="GO" id="GO:0075732">
    <property type="term" value="P:viral penetration into host nucleus"/>
    <property type="evidence" value="ECO:0007669"/>
    <property type="project" value="UniProtKB-UniRule"/>
</dbReference>
<dbReference type="Gene3D" id="6.10.210.10">
    <property type="match status" value="1"/>
</dbReference>
<dbReference type="Gene3D" id="1.20.5.90">
    <property type="entry name" value="VpR/VpX protein, C-terminal domain"/>
    <property type="match status" value="1"/>
</dbReference>
<dbReference type="HAMAP" id="MF_04080">
    <property type="entry name" value="HIV_VPR"/>
    <property type="match status" value="1"/>
</dbReference>
<dbReference type="InterPro" id="IPR000012">
    <property type="entry name" value="RetroV_VpR/X"/>
</dbReference>
<dbReference type="Pfam" id="PF00522">
    <property type="entry name" value="VPR"/>
    <property type="match status" value="1"/>
</dbReference>
<dbReference type="PRINTS" id="PR00444">
    <property type="entry name" value="HIVVPRVPX"/>
</dbReference>
<proteinExistence type="inferred from homology"/>
<sequence>MERAPEDAGPQREPYNEWALELLEELKNEAVRHFPRIWLHGLGQHIYNTYGDTWEGVEAIIRILQQLLFIHYRIGCQHSRIGITPQRRRNGASRS</sequence>
<name>VPR_HV1YB</name>
<keyword id="KW-0010">Activator</keyword>
<keyword id="KW-0014">AIDS</keyword>
<keyword id="KW-0053">Apoptosis</keyword>
<keyword id="KW-0131">Cell cycle</keyword>
<keyword id="KW-1079">Host G2/M cell cycle arrest by virus</keyword>
<keyword id="KW-1048">Host nucleus</keyword>
<keyword id="KW-0945">Host-virus interaction</keyword>
<keyword id="KW-0407">Ion channel</keyword>
<keyword id="KW-0406">Ion transport</keyword>
<keyword id="KW-1121">Modulation of host cell cycle by virus</keyword>
<keyword id="KW-0597">Phosphoprotein</keyword>
<keyword id="KW-0804">Transcription</keyword>
<keyword id="KW-0805">Transcription regulation</keyword>
<keyword id="KW-0813">Transport</keyword>
<keyword id="KW-1163">Viral penetration into host nucleus</keyword>
<keyword id="KW-0946">Virion</keyword>
<keyword id="KW-1160">Virus entry into host cell</keyword>
<reference key="1">
    <citation type="journal article" date="2004" name="AIDS">
        <title>Phylogenetic characteristics of three new HIV-1 N strains and implications for the origin of group N.</title>
        <authorList>
            <person name="Roques P."/>
            <person name="Robertson D.L."/>
            <person name="Souquiere S."/>
            <person name="Apetrei C."/>
            <person name="Nerrienet E."/>
            <person name="Barre-Sinoussi F."/>
            <person name="Muller-Trutwin M."/>
            <person name="Simon F."/>
        </authorList>
    </citation>
    <scope>NUCLEOTIDE SEQUENCE [GENOMIC DNA]</scope>
</reference>
<gene>
    <name evidence="1" type="primary">vpr</name>
</gene>
<organismHost>
    <name type="scientific">Homo sapiens</name>
    <name type="common">Human</name>
    <dbReference type="NCBI Taxonomy" id="9606"/>
</organismHost>
<accession>Q9IDV6</accession>
<evidence type="ECO:0000255" key="1">
    <source>
        <dbReference type="HAMAP-Rule" id="MF_04080"/>
    </source>
</evidence>
<organism>
    <name type="scientific">Human immunodeficiency virus type 1 group N (isolate YBF106)</name>
    <name type="common">HIV-1</name>
    <dbReference type="NCBI Taxonomy" id="388819"/>
    <lineage>
        <taxon>Viruses</taxon>
        <taxon>Riboviria</taxon>
        <taxon>Pararnavirae</taxon>
        <taxon>Artverviricota</taxon>
        <taxon>Revtraviricetes</taxon>
        <taxon>Ortervirales</taxon>
        <taxon>Retroviridae</taxon>
        <taxon>Orthoretrovirinae</taxon>
        <taxon>Lentivirus</taxon>
        <taxon>Human immunodeficiency virus type 1</taxon>
    </lineage>
</organism>
<feature type="chain" id="PRO_0000246767" description="Protein Vpr">
    <location>
        <begin position="1"/>
        <end position="95"/>
    </location>
</feature>
<feature type="region of interest" description="Homooligomerization" evidence="1">
    <location>
        <begin position="1"/>
        <end position="42"/>
    </location>
</feature>
<feature type="modified residue" description="Phosphoserine; by host" evidence="1">
    <location>
        <position position="79"/>
    </location>
</feature>
<feature type="modified residue" description="Phosphoserine; by host" evidence="1">
    <location>
        <position position="93"/>
    </location>
</feature>
<feature type="modified residue" description="Phosphoserine; by host" evidence="1">
    <location>
        <position position="95"/>
    </location>
</feature>